<name>ERF1_XENTR</name>
<keyword id="KW-0963">Cytoplasm</keyword>
<keyword id="KW-0866">Nonsense-mediated mRNA decay</keyword>
<keyword id="KW-0648">Protein biosynthesis</keyword>
<keyword id="KW-1185">Reference proteome</keyword>
<comment type="function">
    <text evidence="1">Component of the eRF1-eRF3-GTP ternary complex, a ternary complex that mediates translation termination in response to the termination codons. The eRF1-eRF3-GTP complex binds to a stop codon in the ribosomal A-site. ETF1/ERF1 is responsible for stop codon recognition and inducing hydrolysis of peptidyl-tRNA. Following GTP hydrolysis, eRF3 (GSPT1/ERF3A or GSPT2/ERF3B) dissociates, permitting ETF1/eRF1 to accommodate fully in the A-site, followed by hydrolysis of peptidyl-tRNA.</text>
</comment>
<comment type="subunit">
    <text evidence="1">Component of the eRF1-eRF3-GTP ternary complex, composed of ETF1/ERF1 and eRF3 (GSPT1/ERF3A or GSPT2/ERF3B) and GTP.</text>
</comment>
<comment type="subcellular location">
    <subcellularLocation>
        <location evidence="1">Cytoplasm</location>
    </subcellularLocation>
</comment>
<comment type="similarity">
    <text evidence="2">Belongs to the eukaryotic release factor 1 family.</text>
</comment>
<organism>
    <name type="scientific">Xenopus tropicalis</name>
    <name type="common">Western clawed frog</name>
    <name type="synonym">Silurana tropicalis</name>
    <dbReference type="NCBI Taxonomy" id="8364"/>
    <lineage>
        <taxon>Eukaryota</taxon>
        <taxon>Metazoa</taxon>
        <taxon>Chordata</taxon>
        <taxon>Craniata</taxon>
        <taxon>Vertebrata</taxon>
        <taxon>Euteleostomi</taxon>
        <taxon>Amphibia</taxon>
        <taxon>Batrachia</taxon>
        <taxon>Anura</taxon>
        <taxon>Pipoidea</taxon>
        <taxon>Pipidae</taxon>
        <taxon>Xenopodinae</taxon>
        <taxon>Xenopus</taxon>
        <taxon>Silurana</taxon>
    </lineage>
</organism>
<feature type="chain" id="PRO_0000143145" description="Eukaryotic peptide chain release factor subunit 1">
    <location>
        <begin position="1"/>
        <end position="437"/>
    </location>
</feature>
<feature type="short sequence motif" description="NIKS motif; plays an important role in translational termination" evidence="1">
    <location>
        <begin position="61"/>
        <end position="64"/>
    </location>
</feature>
<dbReference type="EMBL" id="CR762244">
    <property type="protein sequence ID" value="CAJ81583.1"/>
    <property type="molecule type" value="mRNA"/>
</dbReference>
<dbReference type="EMBL" id="BC061387">
    <property type="protein sequence ID" value="AAH61387.1"/>
    <property type="molecule type" value="mRNA"/>
</dbReference>
<dbReference type="RefSeq" id="NP_989035.1">
    <property type="nucleotide sequence ID" value="NM_203704.1"/>
</dbReference>
<dbReference type="BMRB" id="P62498"/>
<dbReference type="SMR" id="P62498"/>
<dbReference type="FunCoup" id="P62498">
    <property type="interactions" value="3832"/>
</dbReference>
<dbReference type="STRING" id="8364.ENSXETP00000017805"/>
<dbReference type="PaxDb" id="8364-ENSXETP00000025940"/>
<dbReference type="DNASU" id="394632"/>
<dbReference type="GeneID" id="394632"/>
<dbReference type="KEGG" id="xtr:394632"/>
<dbReference type="AGR" id="Xenbase:XB-GENE-5744577"/>
<dbReference type="CTD" id="2107"/>
<dbReference type="Xenbase" id="XB-GENE-5744577">
    <property type="gene designation" value="etf1"/>
</dbReference>
<dbReference type="eggNOG" id="KOG0688">
    <property type="taxonomic scope" value="Eukaryota"/>
</dbReference>
<dbReference type="HOGENOM" id="CLU_035759_2_1_1"/>
<dbReference type="InParanoid" id="P62498"/>
<dbReference type="OMA" id="RCNGSEE"/>
<dbReference type="OrthoDB" id="10254527at2759"/>
<dbReference type="PhylomeDB" id="P62498"/>
<dbReference type="Reactome" id="R-XTR-975956">
    <property type="pathway name" value="Nonsense Mediated Decay (NMD) independent of the Exon Junction Complex (EJC)"/>
</dbReference>
<dbReference type="Reactome" id="R-XTR-975957">
    <property type="pathway name" value="Nonsense Mediated Decay (NMD) enhanced by the Exon Junction Complex (EJC)"/>
</dbReference>
<dbReference type="Proteomes" id="UP000008143">
    <property type="component" value="Chromosome 3"/>
</dbReference>
<dbReference type="Bgee" id="ENSXETG00000011876">
    <property type="expression patterns" value="Expressed in ovary and 15 other cell types or tissues"/>
</dbReference>
<dbReference type="GO" id="GO:0005737">
    <property type="term" value="C:cytoplasm"/>
    <property type="evidence" value="ECO:0000250"/>
    <property type="project" value="UniProtKB"/>
</dbReference>
<dbReference type="GO" id="GO:0003747">
    <property type="term" value="F:translation release factor activity"/>
    <property type="evidence" value="ECO:0007669"/>
    <property type="project" value="InterPro"/>
</dbReference>
<dbReference type="GO" id="GO:0008079">
    <property type="term" value="F:translation termination factor activity"/>
    <property type="evidence" value="ECO:0000250"/>
    <property type="project" value="UniProtKB"/>
</dbReference>
<dbReference type="GO" id="GO:0000184">
    <property type="term" value="P:nuclear-transcribed mRNA catabolic process, nonsense-mediated decay"/>
    <property type="evidence" value="ECO:0007669"/>
    <property type="project" value="UniProtKB-KW"/>
</dbReference>
<dbReference type="GO" id="GO:0006449">
    <property type="term" value="P:regulation of translational termination"/>
    <property type="evidence" value="ECO:0000250"/>
    <property type="project" value="UniProtKB"/>
</dbReference>
<dbReference type="FunFam" id="3.30.1330.30:FF:000009">
    <property type="entry name" value="Eukaryotic peptide chain release factor subunit 1"/>
    <property type="match status" value="1"/>
</dbReference>
<dbReference type="FunFam" id="3.30.420.60:FF:000001">
    <property type="entry name" value="Eukaryotic peptide chain release factor subunit 1"/>
    <property type="match status" value="1"/>
</dbReference>
<dbReference type="FunFam" id="3.30.960.10:FF:000001">
    <property type="entry name" value="Eukaryotic peptide chain release factor subunit 1"/>
    <property type="match status" value="1"/>
</dbReference>
<dbReference type="Gene3D" id="3.30.1330.30">
    <property type="match status" value="1"/>
</dbReference>
<dbReference type="Gene3D" id="3.30.960.10">
    <property type="entry name" value="eRF1 domain 1"/>
    <property type="match status" value="1"/>
</dbReference>
<dbReference type="Gene3D" id="3.30.420.60">
    <property type="entry name" value="eRF1 domain 2"/>
    <property type="match status" value="1"/>
</dbReference>
<dbReference type="InterPro" id="IPR042226">
    <property type="entry name" value="eFR1_2_sf"/>
</dbReference>
<dbReference type="InterPro" id="IPR005140">
    <property type="entry name" value="eRF1_1_Pelota"/>
</dbReference>
<dbReference type="InterPro" id="IPR024049">
    <property type="entry name" value="eRF1_1_sf"/>
</dbReference>
<dbReference type="InterPro" id="IPR005141">
    <property type="entry name" value="eRF1_2"/>
</dbReference>
<dbReference type="InterPro" id="IPR005142">
    <property type="entry name" value="eRF1_3"/>
</dbReference>
<dbReference type="InterPro" id="IPR004403">
    <property type="entry name" value="Peptide_chain-rel_eRF1/aRF1"/>
</dbReference>
<dbReference type="InterPro" id="IPR029064">
    <property type="entry name" value="Ribosomal_eL30-like_sf"/>
</dbReference>
<dbReference type="NCBIfam" id="TIGR03676">
    <property type="entry name" value="aRF1_eRF1"/>
    <property type="match status" value="1"/>
</dbReference>
<dbReference type="PANTHER" id="PTHR10113">
    <property type="entry name" value="PEPTIDE CHAIN RELEASE FACTOR SUBUNIT 1"/>
    <property type="match status" value="1"/>
</dbReference>
<dbReference type="Pfam" id="PF03463">
    <property type="entry name" value="eRF1_1"/>
    <property type="match status" value="1"/>
</dbReference>
<dbReference type="Pfam" id="PF03464">
    <property type="entry name" value="eRF1_2"/>
    <property type="match status" value="1"/>
</dbReference>
<dbReference type="Pfam" id="PF03465">
    <property type="entry name" value="eRF1_3"/>
    <property type="match status" value="1"/>
</dbReference>
<dbReference type="SMART" id="SM01194">
    <property type="entry name" value="eRF1_1"/>
    <property type="match status" value="1"/>
</dbReference>
<dbReference type="SUPFAM" id="SSF55315">
    <property type="entry name" value="L30e-like"/>
    <property type="match status" value="1"/>
</dbReference>
<dbReference type="SUPFAM" id="SSF55481">
    <property type="entry name" value="N-terminal domain of eukaryotic peptide chain release factor subunit 1, ERF1"/>
    <property type="match status" value="1"/>
</dbReference>
<dbReference type="SUPFAM" id="SSF53137">
    <property type="entry name" value="Translational machinery components"/>
    <property type="match status" value="1"/>
</dbReference>
<gene>
    <name type="primary">etf1</name>
    <name type="ORF">TGas126k19.1</name>
</gene>
<evidence type="ECO:0000250" key="1">
    <source>
        <dbReference type="UniProtKB" id="P62495"/>
    </source>
</evidence>
<evidence type="ECO:0000305" key="2"/>
<sequence>MADDPSAADRNVEIWKIKKLIKSLEAARGNGTSMISLIIPPKDQISRVAKMLADEFGTASNIKSRVNRLSVLGAITSVQQRLKLYNKVPPNGLVVYCGTIVTEEGKEKKVNIDFEPFKPINTSLYLCDNKFHTEALTALLSDDSKFGFIVIDGSGALFGTLQGNTREVLHKFTVDLPKKHGRGGQSALRFARLRMEKRHNYVRKVAETAVQLFISGDKVNVAGLVLAGSADFKTELSQSDMFDQRLQSKVLKLVDISYGGENGFNQAIELSTEVLSNVKFIQEKKLIGRYFDEISQDTGKYCFGVEDTLKALEMGAVEILIVYENLDIMRYVLRCNGSEEEKTLYLTPEQEKDKSHFIDKETGQEHELIESMPLLEWFANNYKKFGATLEIVTDKSQEGSQFVKGFGGIGGILRYRVDFQGMEYQGGDDEFFDLDDY</sequence>
<protein>
    <recommendedName>
        <fullName>Eukaryotic peptide chain release factor subunit 1</fullName>
        <shortName>Eukaryotic release factor 1</shortName>
        <shortName>eRF1</shortName>
    </recommendedName>
</protein>
<proteinExistence type="evidence at transcript level"/>
<reference key="1">
    <citation type="submission" date="2006-03" db="EMBL/GenBank/DDBJ databases">
        <authorList>
            <consortium name="Sanger Xenopus tropicalis EST/cDNA project"/>
        </authorList>
    </citation>
    <scope>NUCLEOTIDE SEQUENCE [LARGE SCALE MRNA]</scope>
    <source>
        <tissue>Gastrula</tissue>
    </source>
</reference>
<reference key="2">
    <citation type="submission" date="2003-11" db="EMBL/GenBank/DDBJ databases">
        <authorList>
            <consortium name="NIH - Xenopus Gene Collection (XGC) project"/>
        </authorList>
    </citation>
    <scope>NUCLEOTIDE SEQUENCE [LARGE SCALE MRNA]</scope>
    <source>
        <tissue>Embryo</tissue>
    </source>
</reference>
<accession>P62498</accession>
<accession>Q28F03</accession>
<accession>Q6P843</accession>